<sequence>MLNITPIPALSDNYIWAIQKDNDVIIVDPSDAVPVLAFIAKNQLNLTAILLTHNHHDHTDGMPELLSRYPQLSVYGPQEVAQFANRIVQPEDHLTLFDYDVRVIESAGHTAQHVSYLFGNEYLFCGDVLFSGGCGRVFTGNYQAQFDALQRFKALPEFVEIFPAHEYTLSNLKFAEAVLAPSCALFEIQERAEILRSRNQPTLPTTLERELQINPFLQAVDLDQFIALRHQKDNF</sequence>
<dbReference type="EC" id="3.1.2.6" evidence="1"/>
<dbReference type="EMBL" id="CP001091">
    <property type="protein sequence ID" value="ACE61091.1"/>
    <property type="molecule type" value="Genomic_DNA"/>
</dbReference>
<dbReference type="RefSeq" id="WP_005607164.1">
    <property type="nucleotide sequence ID" value="NC_010939.1"/>
</dbReference>
<dbReference type="SMR" id="B3H0S9"/>
<dbReference type="KEGG" id="apa:APP7_0439"/>
<dbReference type="HOGENOM" id="CLU_030571_4_1_6"/>
<dbReference type="UniPathway" id="UPA00619">
    <property type="reaction ID" value="UER00676"/>
</dbReference>
<dbReference type="Proteomes" id="UP000001226">
    <property type="component" value="Chromosome"/>
</dbReference>
<dbReference type="GO" id="GO:0004416">
    <property type="term" value="F:hydroxyacylglutathione hydrolase activity"/>
    <property type="evidence" value="ECO:0007669"/>
    <property type="project" value="UniProtKB-UniRule"/>
</dbReference>
<dbReference type="GO" id="GO:0046872">
    <property type="term" value="F:metal ion binding"/>
    <property type="evidence" value="ECO:0007669"/>
    <property type="project" value="UniProtKB-KW"/>
</dbReference>
<dbReference type="GO" id="GO:0019243">
    <property type="term" value="P:methylglyoxal catabolic process to D-lactate via S-lactoyl-glutathione"/>
    <property type="evidence" value="ECO:0007669"/>
    <property type="project" value="InterPro"/>
</dbReference>
<dbReference type="CDD" id="cd07723">
    <property type="entry name" value="hydroxyacylglutathione_hydrolase_MBL-fold"/>
    <property type="match status" value="1"/>
</dbReference>
<dbReference type="Gene3D" id="3.60.15.10">
    <property type="entry name" value="Ribonuclease Z/Hydroxyacylglutathione hydrolase-like"/>
    <property type="match status" value="1"/>
</dbReference>
<dbReference type="HAMAP" id="MF_01374">
    <property type="entry name" value="Glyoxalase_2"/>
    <property type="match status" value="1"/>
</dbReference>
<dbReference type="InterPro" id="IPR035680">
    <property type="entry name" value="Clx_II_MBL"/>
</dbReference>
<dbReference type="InterPro" id="IPR050110">
    <property type="entry name" value="Glyoxalase_II_hydrolase"/>
</dbReference>
<dbReference type="InterPro" id="IPR032282">
    <property type="entry name" value="HAGH_C"/>
</dbReference>
<dbReference type="InterPro" id="IPR017782">
    <property type="entry name" value="Hydroxyacylglutathione_Hdrlase"/>
</dbReference>
<dbReference type="InterPro" id="IPR001279">
    <property type="entry name" value="Metallo-B-lactamas"/>
</dbReference>
<dbReference type="InterPro" id="IPR036866">
    <property type="entry name" value="RibonucZ/Hydroxyglut_hydro"/>
</dbReference>
<dbReference type="NCBIfam" id="TIGR03413">
    <property type="entry name" value="GSH_gloB"/>
    <property type="match status" value="1"/>
</dbReference>
<dbReference type="PANTHER" id="PTHR43705">
    <property type="entry name" value="HYDROXYACYLGLUTATHIONE HYDROLASE"/>
    <property type="match status" value="1"/>
</dbReference>
<dbReference type="PANTHER" id="PTHR43705:SF1">
    <property type="entry name" value="HYDROXYACYLGLUTATHIONE HYDROLASE GLOB"/>
    <property type="match status" value="1"/>
</dbReference>
<dbReference type="Pfam" id="PF16123">
    <property type="entry name" value="HAGH_C"/>
    <property type="match status" value="1"/>
</dbReference>
<dbReference type="Pfam" id="PF00753">
    <property type="entry name" value="Lactamase_B"/>
    <property type="match status" value="1"/>
</dbReference>
<dbReference type="SMART" id="SM00849">
    <property type="entry name" value="Lactamase_B"/>
    <property type="match status" value="1"/>
</dbReference>
<dbReference type="SUPFAM" id="SSF56281">
    <property type="entry name" value="Metallo-hydrolase/oxidoreductase"/>
    <property type="match status" value="1"/>
</dbReference>
<organism>
    <name type="scientific">Actinobacillus pleuropneumoniae serotype 7 (strain AP76)</name>
    <dbReference type="NCBI Taxonomy" id="537457"/>
    <lineage>
        <taxon>Bacteria</taxon>
        <taxon>Pseudomonadati</taxon>
        <taxon>Pseudomonadota</taxon>
        <taxon>Gammaproteobacteria</taxon>
        <taxon>Pasteurellales</taxon>
        <taxon>Pasteurellaceae</taxon>
        <taxon>Actinobacillus</taxon>
    </lineage>
</organism>
<keyword id="KW-0378">Hydrolase</keyword>
<keyword id="KW-0479">Metal-binding</keyword>
<keyword id="KW-0862">Zinc</keyword>
<evidence type="ECO:0000255" key="1">
    <source>
        <dbReference type="HAMAP-Rule" id="MF_01374"/>
    </source>
</evidence>
<comment type="function">
    <text evidence="1">Thiolesterase that catalyzes the hydrolysis of S-D-lactoyl-glutathione to form glutathione and D-lactic acid.</text>
</comment>
<comment type="catalytic activity">
    <reaction evidence="1">
        <text>an S-(2-hydroxyacyl)glutathione + H2O = a 2-hydroxy carboxylate + glutathione + H(+)</text>
        <dbReference type="Rhea" id="RHEA:21864"/>
        <dbReference type="ChEBI" id="CHEBI:15377"/>
        <dbReference type="ChEBI" id="CHEBI:15378"/>
        <dbReference type="ChEBI" id="CHEBI:57925"/>
        <dbReference type="ChEBI" id="CHEBI:58896"/>
        <dbReference type="ChEBI" id="CHEBI:71261"/>
        <dbReference type="EC" id="3.1.2.6"/>
    </reaction>
</comment>
<comment type="cofactor">
    <cofactor evidence="1">
        <name>Zn(2+)</name>
        <dbReference type="ChEBI" id="CHEBI:29105"/>
    </cofactor>
    <text evidence="1">Binds 2 Zn(2+) ions per subunit.</text>
</comment>
<comment type="pathway">
    <text evidence="1">Secondary metabolite metabolism; methylglyoxal degradation; (R)-lactate from methylglyoxal: step 2/2.</text>
</comment>
<comment type="subunit">
    <text evidence="1">Monomer.</text>
</comment>
<comment type="similarity">
    <text evidence="1">Belongs to the metallo-beta-lactamase superfamily. Glyoxalase II family.</text>
</comment>
<name>GLO2_ACTP7</name>
<protein>
    <recommendedName>
        <fullName evidence="1">Hydroxyacylglutathione hydrolase</fullName>
        <ecNumber evidence="1">3.1.2.6</ecNumber>
    </recommendedName>
    <alternativeName>
        <fullName evidence="1">Glyoxalase II</fullName>
        <shortName evidence="1">Glx II</shortName>
    </alternativeName>
</protein>
<feature type="chain" id="PRO_1000144748" description="Hydroxyacylglutathione hydrolase">
    <location>
        <begin position="1"/>
        <end position="235"/>
    </location>
</feature>
<feature type="binding site" evidence="1">
    <location>
        <position position="53"/>
    </location>
    <ligand>
        <name>Zn(2+)</name>
        <dbReference type="ChEBI" id="CHEBI:29105"/>
        <label>1</label>
    </ligand>
</feature>
<feature type="binding site" evidence="1">
    <location>
        <position position="55"/>
    </location>
    <ligand>
        <name>Zn(2+)</name>
        <dbReference type="ChEBI" id="CHEBI:29105"/>
        <label>1</label>
    </ligand>
</feature>
<feature type="binding site" evidence="1">
    <location>
        <position position="57"/>
    </location>
    <ligand>
        <name>Zn(2+)</name>
        <dbReference type="ChEBI" id="CHEBI:29105"/>
        <label>2</label>
    </ligand>
</feature>
<feature type="binding site" evidence="1">
    <location>
        <position position="58"/>
    </location>
    <ligand>
        <name>Zn(2+)</name>
        <dbReference type="ChEBI" id="CHEBI:29105"/>
        <label>2</label>
    </ligand>
</feature>
<feature type="binding site" evidence="1">
    <location>
        <position position="109"/>
    </location>
    <ligand>
        <name>Zn(2+)</name>
        <dbReference type="ChEBI" id="CHEBI:29105"/>
        <label>1</label>
    </ligand>
</feature>
<feature type="binding site" evidence="1">
    <location>
        <position position="127"/>
    </location>
    <ligand>
        <name>Zn(2+)</name>
        <dbReference type="ChEBI" id="CHEBI:29105"/>
        <label>1</label>
    </ligand>
</feature>
<feature type="binding site" evidence="1">
    <location>
        <position position="127"/>
    </location>
    <ligand>
        <name>Zn(2+)</name>
        <dbReference type="ChEBI" id="CHEBI:29105"/>
        <label>2</label>
    </ligand>
</feature>
<feature type="binding site" evidence="1">
    <location>
        <position position="165"/>
    </location>
    <ligand>
        <name>Zn(2+)</name>
        <dbReference type="ChEBI" id="CHEBI:29105"/>
        <label>2</label>
    </ligand>
</feature>
<reference key="1">
    <citation type="submission" date="2008-06" db="EMBL/GenBank/DDBJ databases">
        <title>Genome and proteome analysis of A. pleuropneumoniae serotype 7.</title>
        <authorList>
            <person name="Linke B."/>
            <person name="Buettner F."/>
            <person name="Martinez-Arias R."/>
            <person name="Goesmann A."/>
            <person name="Baltes N."/>
            <person name="Tegetmeyer H."/>
            <person name="Singh M."/>
            <person name="Gerlach G.F."/>
        </authorList>
    </citation>
    <scope>NUCLEOTIDE SEQUENCE [LARGE SCALE GENOMIC DNA]</scope>
    <source>
        <strain>AP76</strain>
    </source>
</reference>
<gene>
    <name evidence="1" type="primary">gloB</name>
    <name type="ordered locus">APP7_0439</name>
</gene>
<accession>B3H0S9</accession>
<proteinExistence type="inferred from homology"/>